<keyword id="KW-0119">Carbohydrate metabolism</keyword>
<keyword id="KW-0413">Isomerase</keyword>
<feature type="chain" id="PRO_1000164998" description="Putative N-acetylmannosamine-6-phosphate 2-epimerase">
    <location>
        <begin position="1"/>
        <end position="240"/>
    </location>
</feature>
<accession>C3LNA0</accession>
<dbReference type="EC" id="5.1.3.9" evidence="1"/>
<dbReference type="EMBL" id="CP001233">
    <property type="protein sequence ID" value="ACP06026.1"/>
    <property type="molecule type" value="Genomic_DNA"/>
</dbReference>
<dbReference type="RefSeq" id="WP_001889711.1">
    <property type="nucleotide sequence ID" value="NC_012578.1"/>
</dbReference>
<dbReference type="SMR" id="C3LNA0"/>
<dbReference type="KEGG" id="vcm:VCM66_1719"/>
<dbReference type="HOGENOM" id="CLU_086300_0_0_6"/>
<dbReference type="UniPathway" id="UPA00629">
    <property type="reaction ID" value="UER00682"/>
</dbReference>
<dbReference type="Proteomes" id="UP000001217">
    <property type="component" value="Chromosome I"/>
</dbReference>
<dbReference type="GO" id="GO:0005829">
    <property type="term" value="C:cytosol"/>
    <property type="evidence" value="ECO:0007669"/>
    <property type="project" value="TreeGrafter"/>
</dbReference>
<dbReference type="GO" id="GO:0047465">
    <property type="term" value="F:N-acylglucosamine-6-phosphate 2-epimerase activity"/>
    <property type="evidence" value="ECO:0007669"/>
    <property type="project" value="UniProtKB-EC"/>
</dbReference>
<dbReference type="GO" id="GO:0005975">
    <property type="term" value="P:carbohydrate metabolic process"/>
    <property type="evidence" value="ECO:0007669"/>
    <property type="project" value="UniProtKB-UniRule"/>
</dbReference>
<dbReference type="GO" id="GO:0006053">
    <property type="term" value="P:N-acetylmannosamine catabolic process"/>
    <property type="evidence" value="ECO:0007669"/>
    <property type="project" value="TreeGrafter"/>
</dbReference>
<dbReference type="GO" id="GO:0019262">
    <property type="term" value="P:N-acetylneuraminate catabolic process"/>
    <property type="evidence" value="ECO:0007669"/>
    <property type="project" value="UniProtKB-UniRule"/>
</dbReference>
<dbReference type="CDD" id="cd04729">
    <property type="entry name" value="NanE"/>
    <property type="match status" value="1"/>
</dbReference>
<dbReference type="FunFam" id="3.20.20.70:FF:000035">
    <property type="entry name" value="Putative N-acetylmannosamine-6-phosphate 2-epimerase"/>
    <property type="match status" value="1"/>
</dbReference>
<dbReference type="Gene3D" id="3.20.20.70">
    <property type="entry name" value="Aldolase class I"/>
    <property type="match status" value="1"/>
</dbReference>
<dbReference type="HAMAP" id="MF_01235">
    <property type="entry name" value="ManNAc6P_epimer"/>
    <property type="match status" value="1"/>
</dbReference>
<dbReference type="InterPro" id="IPR013785">
    <property type="entry name" value="Aldolase_TIM"/>
</dbReference>
<dbReference type="InterPro" id="IPR007260">
    <property type="entry name" value="NanE"/>
</dbReference>
<dbReference type="InterPro" id="IPR011060">
    <property type="entry name" value="RibuloseP-bd_barrel"/>
</dbReference>
<dbReference type="NCBIfam" id="NF002231">
    <property type="entry name" value="PRK01130.1"/>
    <property type="match status" value="1"/>
</dbReference>
<dbReference type="PANTHER" id="PTHR36204">
    <property type="entry name" value="N-ACETYLMANNOSAMINE-6-PHOSPHATE 2-EPIMERASE-RELATED"/>
    <property type="match status" value="1"/>
</dbReference>
<dbReference type="PANTHER" id="PTHR36204:SF1">
    <property type="entry name" value="N-ACETYLMANNOSAMINE-6-PHOSPHATE 2-EPIMERASE-RELATED"/>
    <property type="match status" value="1"/>
</dbReference>
<dbReference type="Pfam" id="PF04131">
    <property type="entry name" value="NanE"/>
    <property type="match status" value="1"/>
</dbReference>
<dbReference type="SUPFAM" id="SSF51366">
    <property type="entry name" value="Ribulose-phoshate binding barrel"/>
    <property type="match status" value="1"/>
</dbReference>
<name>NANE_VIBCM</name>
<gene>
    <name evidence="1" type="primary">nanE</name>
    <name type="ordered locus">VCM66_1719</name>
</gene>
<comment type="function">
    <text evidence="1">Converts N-acetylmannosamine-6-phosphate (ManNAc-6-P) to N-acetylglucosamine-6-phosphate (GlcNAc-6-P).</text>
</comment>
<comment type="catalytic activity">
    <reaction evidence="1">
        <text>an N-acyl-D-glucosamine 6-phosphate = an N-acyl-D-mannosamine 6-phosphate</text>
        <dbReference type="Rhea" id="RHEA:23932"/>
        <dbReference type="ChEBI" id="CHEBI:57599"/>
        <dbReference type="ChEBI" id="CHEBI:57666"/>
        <dbReference type="EC" id="5.1.3.9"/>
    </reaction>
</comment>
<comment type="pathway">
    <text evidence="1">Amino-sugar metabolism; N-acetylneuraminate degradation; D-fructose 6-phosphate from N-acetylneuraminate: step 3/5.</text>
</comment>
<comment type="similarity">
    <text evidence="1">Belongs to the NanE family.</text>
</comment>
<sequence length="240" mass="25502">MRPVVRKNFLNIEELKRFLNGQTVVSIQPVTGSPLDKTDFIVAMAIAVEQAGAKALRIEGVNNVAAVSAAVTIPIIGIVKRDLPDSPIRITPFVSDVDGLANAGATVIAFDATDRTRPESRERIAQAIKNTGCFAMADCSTFEDGLWANSQGVEIVGSTLSGYVGDIEPTVPDFQLVKAFSEAGFFTMAEGRYNTPELAAKAIESGAVAVTVGSALTRLEVVTQWFNNATQAAGERKCAH</sequence>
<proteinExistence type="inferred from homology"/>
<protein>
    <recommendedName>
        <fullName evidence="1">Putative N-acetylmannosamine-6-phosphate 2-epimerase</fullName>
        <ecNumber evidence="1">5.1.3.9</ecNumber>
    </recommendedName>
    <alternativeName>
        <fullName evidence="1">ManNAc-6-P epimerase</fullName>
    </alternativeName>
</protein>
<evidence type="ECO:0000255" key="1">
    <source>
        <dbReference type="HAMAP-Rule" id="MF_01235"/>
    </source>
</evidence>
<organism>
    <name type="scientific">Vibrio cholerae serotype O1 (strain M66-2)</name>
    <dbReference type="NCBI Taxonomy" id="579112"/>
    <lineage>
        <taxon>Bacteria</taxon>
        <taxon>Pseudomonadati</taxon>
        <taxon>Pseudomonadota</taxon>
        <taxon>Gammaproteobacteria</taxon>
        <taxon>Vibrionales</taxon>
        <taxon>Vibrionaceae</taxon>
        <taxon>Vibrio</taxon>
    </lineage>
</organism>
<reference key="1">
    <citation type="journal article" date="2008" name="PLoS ONE">
        <title>A recalibrated molecular clock and independent origins for the cholera pandemic clones.</title>
        <authorList>
            <person name="Feng L."/>
            <person name="Reeves P.R."/>
            <person name="Lan R."/>
            <person name="Ren Y."/>
            <person name="Gao C."/>
            <person name="Zhou Z."/>
            <person name="Ren Y."/>
            <person name="Cheng J."/>
            <person name="Wang W."/>
            <person name="Wang J."/>
            <person name="Qian W."/>
            <person name="Li D."/>
            <person name="Wang L."/>
        </authorList>
    </citation>
    <scope>NUCLEOTIDE SEQUENCE [LARGE SCALE GENOMIC DNA]</scope>
    <source>
        <strain>M66-2</strain>
    </source>
</reference>